<gene>
    <name type="primary">Mmp3</name>
</gene>
<keyword id="KW-0106">Calcium</keyword>
<keyword id="KW-0177">Collagen degradation</keyword>
<keyword id="KW-1015">Disulfide bond</keyword>
<keyword id="KW-0272">Extracellular matrix</keyword>
<keyword id="KW-0378">Hydrolase</keyword>
<keyword id="KW-0391">Immunity</keyword>
<keyword id="KW-0399">Innate immunity</keyword>
<keyword id="KW-0479">Metal-binding</keyword>
<keyword id="KW-0482">Metalloprotease</keyword>
<keyword id="KW-0645">Protease</keyword>
<keyword id="KW-1185">Reference proteome</keyword>
<keyword id="KW-0677">Repeat</keyword>
<keyword id="KW-0964">Secreted</keyword>
<keyword id="KW-0732">Signal</keyword>
<keyword id="KW-0862">Zinc</keyword>
<keyword id="KW-0865">Zymogen</keyword>
<organism>
    <name type="scientific">Mus musculus</name>
    <name type="common">Mouse</name>
    <dbReference type="NCBI Taxonomy" id="10090"/>
    <lineage>
        <taxon>Eukaryota</taxon>
        <taxon>Metazoa</taxon>
        <taxon>Chordata</taxon>
        <taxon>Craniata</taxon>
        <taxon>Vertebrata</taxon>
        <taxon>Euteleostomi</taxon>
        <taxon>Mammalia</taxon>
        <taxon>Eutheria</taxon>
        <taxon>Euarchontoglires</taxon>
        <taxon>Glires</taxon>
        <taxon>Rodentia</taxon>
        <taxon>Myomorpha</taxon>
        <taxon>Muroidea</taxon>
        <taxon>Muridae</taxon>
        <taxon>Murinae</taxon>
        <taxon>Mus</taxon>
        <taxon>Mus</taxon>
    </lineage>
</organism>
<evidence type="ECO:0000250" key="1"/>
<evidence type="ECO:0000250" key="2">
    <source>
        <dbReference type="UniProtKB" id="P08254"/>
    </source>
</evidence>
<evidence type="ECO:0000255" key="3">
    <source>
        <dbReference type="PROSITE-ProRule" id="PRU10095"/>
    </source>
</evidence>
<evidence type="ECO:0000269" key="4">
    <source>
    </source>
</evidence>
<evidence type="ECO:0000269" key="5">
    <source>
    </source>
</evidence>
<evidence type="ECO:0000269" key="6">
    <source>
    </source>
</evidence>
<evidence type="ECO:0000305" key="7"/>
<reference key="1">
    <citation type="journal article" date="1992" name="Gene">
        <title>Cloning and sequencing of a cDNA encoding mouse stromelysin 1.</title>
        <authorList>
            <person name="Hammani K."/>
            <person name="Henriet P."/>
            <person name="Eeckhout Y."/>
        </authorList>
    </citation>
    <scope>NUCLEOTIDE SEQUENCE [MRNA]</scope>
    <source>
        <strain>NMRI</strain>
        <tissue>Calvaria</tissue>
    </source>
</reference>
<reference key="2">
    <citation type="submission" date="1991-08" db="EMBL/GenBank/DDBJ databases">
        <authorList>
            <person name="Li F."/>
            <person name="Strange R."/>
            <person name="Saurer S."/>
            <person name="Niemann H."/>
            <person name="Friis R.R."/>
        </authorList>
    </citation>
    <scope>NUCLEOTIDE SEQUENCE [MRNA]</scope>
    <source>
        <strain>SWR/J</strain>
    </source>
</reference>
<reference key="3">
    <citation type="journal article" date="1989" name="Genes Dev.">
        <title>Genes for extracellular-matrix-degrading metalloproteinases and their inhibitor, TIMP, are expressed during early mammalian development.</title>
        <authorList>
            <person name="Brenner C.A."/>
            <person name="Adler R.R."/>
            <person name="Rappolee D.A."/>
            <person name="Pedersen R.A."/>
            <person name="Werb Z."/>
        </authorList>
    </citation>
    <scope>NUCLEOTIDE SEQUENCE [MRNA] OF 415-469</scope>
    <scope>DEVELOPMENTAL STAGE</scope>
</reference>
<reference key="4">
    <citation type="journal article" date="2007" name="FASEB J.">
        <title>A pivotal role of matrix metalloproteinase-3 activity in dopaminergic neuronal degeneration via microglial activation.</title>
        <authorList>
            <person name="Kim Y.S."/>
            <person name="Choi D.H."/>
            <person name="Block M.L."/>
            <person name="Lorenzl S."/>
            <person name="Yang L."/>
            <person name="Kim Y.J."/>
            <person name="Sugama S."/>
            <person name="Cho B.P."/>
            <person name="Hwang O."/>
            <person name="Browne S.E."/>
            <person name="Kim S.Y."/>
            <person name="Hong J.S."/>
            <person name="Beal M.F."/>
            <person name="Joh T.H."/>
        </authorList>
    </citation>
    <scope>FUNCTION</scope>
    <scope>DISRUPTION PHENOTYPE</scope>
</reference>
<reference key="5">
    <citation type="journal article" date="2022" name="Antiviral Res.">
        <title>Matrix metalloproteinase 3 restricts viral infection by enhancing host antiviral immunity.</title>
        <authorList>
            <person name="Feng T."/>
            <person name="Tong H."/>
            <person name="Ming Z."/>
            <person name="Deng L."/>
            <person name="Liu J."/>
            <person name="Wu J."/>
            <person name="Chen Z."/>
            <person name="Yan Y."/>
            <person name="Dai J."/>
        </authorList>
    </citation>
    <scope>FUNCTION</scope>
    <scope>DISRUPTION PHENOTYPE</scope>
</reference>
<feature type="signal peptide" evidence="7">
    <location>
        <begin position="1"/>
        <end position="17"/>
    </location>
</feature>
<feature type="propeptide" id="PRO_0000028730" description="Activation peptide">
    <location>
        <begin position="18"/>
        <end position="99"/>
    </location>
</feature>
<feature type="chain" id="PRO_0000028731" description="Stromelysin-1">
    <location>
        <begin position="100"/>
        <end position="477"/>
    </location>
</feature>
<feature type="repeat" description="Hemopexin 1">
    <location>
        <begin position="287"/>
        <end position="336"/>
    </location>
</feature>
<feature type="repeat" description="Hemopexin 2">
    <location>
        <begin position="337"/>
        <end position="383"/>
    </location>
</feature>
<feature type="repeat" description="Hemopexin 3">
    <location>
        <begin position="385"/>
        <end position="433"/>
    </location>
</feature>
<feature type="repeat" description="Hemopexin 4">
    <location>
        <begin position="434"/>
        <end position="477"/>
    </location>
</feature>
<feature type="short sequence motif" description="Cysteine switch" evidence="1">
    <location>
        <begin position="90"/>
        <end position="97"/>
    </location>
</feature>
<feature type="active site" evidence="3">
    <location>
        <position position="219"/>
    </location>
</feature>
<feature type="binding site" description="in inhibited form" evidence="1">
    <location>
        <position position="92"/>
    </location>
    <ligand>
        <name>Zn(2+)</name>
        <dbReference type="ChEBI" id="CHEBI:29105"/>
        <label>2</label>
        <note>catalytic</note>
    </ligand>
</feature>
<feature type="binding site" evidence="1">
    <location>
        <position position="124"/>
    </location>
    <ligand>
        <name>Ca(2+)</name>
        <dbReference type="ChEBI" id="CHEBI:29108"/>
        <label>1</label>
    </ligand>
</feature>
<feature type="binding site" evidence="1">
    <location>
        <position position="158"/>
    </location>
    <ligand>
        <name>Ca(2+)</name>
        <dbReference type="ChEBI" id="CHEBI:29108"/>
        <label>2</label>
    </ligand>
</feature>
<feature type="binding site" evidence="1">
    <location>
        <position position="168"/>
    </location>
    <ligand>
        <name>Zn(2+)</name>
        <dbReference type="ChEBI" id="CHEBI:29105"/>
        <label>1</label>
    </ligand>
</feature>
<feature type="binding site" evidence="1">
    <location>
        <position position="170"/>
    </location>
    <ligand>
        <name>Zn(2+)</name>
        <dbReference type="ChEBI" id="CHEBI:29105"/>
        <label>1</label>
    </ligand>
</feature>
<feature type="binding site" evidence="1">
    <location>
        <position position="175"/>
    </location>
    <ligand>
        <name>Ca(2+)</name>
        <dbReference type="ChEBI" id="CHEBI:29108"/>
        <label>3</label>
    </ligand>
</feature>
<feature type="binding site" evidence="1">
    <location>
        <position position="176"/>
    </location>
    <ligand>
        <name>Ca(2+)</name>
        <dbReference type="ChEBI" id="CHEBI:29108"/>
        <label>3</label>
    </ligand>
</feature>
<feature type="binding site" evidence="1">
    <location>
        <position position="178"/>
    </location>
    <ligand>
        <name>Ca(2+)</name>
        <dbReference type="ChEBI" id="CHEBI:29108"/>
        <label>3</label>
    </ligand>
</feature>
<feature type="binding site" evidence="1">
    <location>
        <position position="180"/>
    </location>
    <ligand>
        <name>Ca(2+)</name>
        <dbReference type="ChEBI" id="CHEBI:29108"/>
        <label>3</label>
    </ligand>
</feature>
<feature type="binding site" evidence="1">
    <location>
        <position position="183"/>
    </location>
    <ligand>
        <name>Zn(2+)</name>
        <dbReference type="ChEBI" id="CHEBI:29105"/>
        <label>1</label>
    </ligand>
</feature>
<feature type="binding site" evidence="1">
    <location>
        <position position="190"/>
    </location>
    <ligand>
        <name>Ca(2+)</name>
        <dbReference type="ChEBI" id="CHEBI:29108"/>
        <label>2</label>
    </ligand>
</feature>
<feature type="binding site" evidence="1">
    <location>
        <position position="192"/>
    </location>
    <ligand>
        <name>Ca(2+)</name>
        <dbReference type="ChEBI" id="CHEBI:29108"/>
        <label>2</label>
    </ligand>
</feature>
<feature type="binding site" evidence="1">
    <location>
        <position position="194"/>
    </location>
    <ligand>
        <name>Ca(2+)</name>
        <dbReference type="ChEBI" id="CHEBI:29108"/>
        <label>2</label>
    </ligand>
</feature>
<feature type="binding site" evidence="1">
    <location>
        <position position="196"/>
    </location>
    <ligand>
        <name>Zn(2+)</name>
        <dbReference type="ChEBI" id="CHEBI:29105"/>
        <label>1</label>
    </ligand>
</feature>
<feature type="binding site" evidence="1">
    <location>
        <position position="198"/>
    </location>
    <ligand>
        <name>Ca(2+)</name>
        <dbReference type="ChEBI" id="CHEBI:29108"/>
        <label>3</label>
    </ligand>
</feature>
<feature type="binding site" evidence="1">
    <location>
        <position position="199"/>
    </location>
    <ligand>
        <name>Ca(2+)</name>
        <dbReference type="ChEBI" id="CHEBI:29108"/>
        <label>1</label>
    </ligand>
</feature>
<feature type="binding site" evidence="1">
    <location>
        <position position="201"/>
    </location>
    <ligand>
        <name>Ca(2+)</name>
        <dbReference type="ChEBI" id="CHEBI:29108"/>
        <label>1</label>
    </ligand>
</feature>
<feature type="binding site" evidence="1">
    <location>
        <position position="201"/>
    </location>
    <ligand>
        <name>Ca(2+)</name>
        <dbReference type="ChEBI" id="CHEBI:29108"/>
        <label>3</label>
    </ligand>
</feature>
<feature type="binding site" evidence="1">
    <location>
        <position position="218"/>
    </location>
    <ligand>
        <name>Zn(2+)</name>
        <dbReference type="ChEBI" id="CHEBI:29105"/>
        <label>2</label>
        <note>catalytic</note>
    </ligand>
</feature>
<feature type="binding site" evidence="1">
    <location>
        <position position="222"/>
    </location>
    <ligand>
        <name>Zn(2+)</name>
        <dbReference type="ChEBI" id="CHEBI:29105"/>
        <label>2</label>
        <note>catalytic</note>
    </ligand>
</feature>
<feature type="binding site" evidence="1">
    <location>
        <position position="228"/>
    </location>
    <ligand>
        <name>Zn(2+)</name>
        <dbReference type="ChEBI" id="CHEBI:29105"/>
        <label>2</label>
        <note>catalytic</note>
    </ligand>
</feature>
<feature type="binding site" evidence="1">
    <location>
        <position position="297"/>
    </location>
    <ligand>
        <name>Ca(2+)</name>
        <dbReference type="ChEBI" id="CHEBI:29108"/>
        <label>4</label>
    </ligand>
</feature>
<feature type="binding site" evidence="1">
    <location>
        <position position="389"/>
    </location>
    <ligand>
        <name>Ca(2+)</name>
        <dbReference type="ChEBI" id="CHEBI:29108"/>
        <label>4</label>
    </ligand>
</feature>
<feature type="binding site" evidence="1">
    <location>
        <position position="438"/>
    </location>
    <ligand>
        <name>Ca(2+)</name>
        <dbReference type="ChEBI" id="CHEBI:29108"/>
        <label>4</label>
    </ligand>
</feature>
<feature type="disulfide bond" evidence="1">
    <location>
        <begin position="290"/>
        <end position="477"/>
    </location>
</feature>
<feature type="sequence conflict" description="In Ref. 3." evidence="7" ref="3">
    <original>I</original>
    <variation>T</variation>
    <location>
        <position position="468"/>
    </location>
</feature>
<accession>P28862</accession>
<name>MMP3_MOUSE</name>
<comment type="function">
    <text evidence="2 4 6">Metalloproteinase with a rather broad substrate specificity that can degrade fibronectin, laminin, gelatins of type I, III, IV, and V; collagens III, IV, X, and IX, and cartilage proteoglycans. Activates different molecules including growth factors, plasminogen or other matrix metalloproteinases such as MMP9. Once released into the extracellular matrix (ECM), the inactive pro-enzyme is activated by the plasmin cascade signaling pathway. Also acts intracellularly. For example, in dopaminergic neurons, gets activated by the serine protease HTRA2 upon stress and plays a pivotal role in DA neuronal degeneration by mediating microglial activation and alpha-synuclein/SNCA cleavage (PubMed:17116747). In addition, plays a role in immune response and possesses antiviral activity against various viruses (PubMed:35940311). Mechanistically, translocates from the cytoplasm into the cell nucleus upon virus infection to influence NF-kappa-B activities (PubMed:35940311).</text>
</comment>
<comment type="catalytic activity">
    <reaction evidence="2">
        <text>Preferential cleavage where P1', P2' and P3' are hydrophobic residues.</text>
        <dbReference type="EC" id="3.4.24.17"/>
    </reaction>
</comment>
<comment type="cofactor">
    <cofactor evidence="1">
        <name>Ca(2+)</name>
        <dbReference type="ChEBI" id="CHEBI:29108"/>
    </cofactor>
    <text evidence="1">Binds 4 Ca(2+) ions per subunit.</text>
</comment>
<comment type="cofactor">
    <cofactor evidence="1">
        <name>Zn(2+)</name>
        <dbReference type="ChEBI" id="CHEBI:29105"/>
    </cofactor>
    <text evidence="1">Binds 2 Zn(2+) ions per subunit.</text>
</comment>
<comment type="subcellular location">
    <subcellularLocation>
        <location evidence="7">Secreted</location>
        <location evidence="7">Extracellular space</location>
        <location evidence="7">Extracellular matrix</location>
    </subcellularLocation>
</comment>
<comment type="developmental stage">
    <text evidence="5">Present in unfertilized eggs and at the zygote and cleavage stages. Levels increase at the blastocyst stage and with endoderm differentiation.</text>
</comment>
<comment type="domain">
    <text>The conserved cysteine present in the cysteine-switch motif binds the catalytic zinc ion, thus inhibiting the enzyme. The dissociation of the cysteine from the zinc ion upon the activation-peptide release activates the enzyme.</text>
</comment>
<comment type="disruption phenotype">
    <text evidence="4 6">MMP3-deficient mice have impaired antiviral cytokine and chemokine responses at early stage of viral infections (PubMed:35940311). In addition, neuronal degeneration, microglial activation, and superoxide generation are largely attenuated in these mutant mice (PubMed:17116747).</text>
</comment>
<comment type="similarity">
    <text evidence="7">Belongs to the peptidase M10A family.</text>
</comment>
<comment type="sequence caution" evidence="7">
    <conflict type="erroneous initiation">
        <sequence resource="EMBL-CDS" id="CAA44860"/>
    </conflict>
</comment>
<proteinExistence type="evidence at transcript level"/>
<dbReference type="EC" id="3.4.24.17"/>
<dbReference type="EMBL" id="X66402">
    <property type="protein sequence ID" value="CAA47029.1"/>
    <property type="molecule type" value="mRNA"/>
</dbReference>
<dbReference type="EMBL" id="X63162">
    <property type="protein sequence ID" value="CAA44860.1"/>
    <property type="status" value="ALT_INIT"/>
    <property type="molecule type" value="mRNA"/>
</dbReference>
<dbReference type="CCDS" id="CCDS22806.1"/>
<dbReference type="PIR" id="JC1476">
    <property type="entry name" value="KCMSS1"/>
</dbReference>
<dbReference type="RefSeq" id="NP_034939.2">
    <property type="nucleotide sequence ID" value="NM_010809.3"/>
</dbReference>
<dbReference type="SMR" id="P28862"/>
<dbReference type="FunCoup" id="P28862">
    <property type="interactions" value="149"/>
</dbReference>
<dbReference type="STRING" id="10090.ENSMUSP00000034497"/>
<dbReference type="MEROPS" id="M10.005"/>
<dbReference type="MoonProt" id="P28862"/>
<dbReference type="iPTMnet" id="P28862"/>
<dbReference type="PhosphoSitePlus" id="P28862"/>
<dbReference type="CPTAC" id="non-CPTAC-3423"/>
<dbReference type="PaxDb" id="10090-ENSMUSP00000034497"/>
<dbReference type="PeptideAtlas" id="P28862"/>
<dbReference type="ProteomicsDB" id="295693"/>
<dbReference type="ABCD" id="P28862">
    <property type="antibodies" value="1 sequenced antibody"/>
</dbReference>
<dbReference type="DNASU" id="17392"/>
<dbReference type="Ensembl" id="ENSMUST00000034497.9">
    <property type="protein sequence ID" value="ENSMUSP00000034497.8"/>
    <property type="gene ID" value="ENSMUSG00000043613.9"/>
</dbReference>
<dbReference type="GeneID" id="17392"/>
<dbReference type="KEGG" id="mmu:17392"/>
<dbReference type="AGR" id="MGI:97010"/>
<dbReference type="CTD" id="4314"/>
<dbReference type="MGI" id="MGI:97010">
    <property type="gene designation" value="Mmp3"/>
</dbReference>
<dbReference type="eggNOG" id="KOG1565">
    <property type="taxonomic scope" value="Eukaryota"/>
</dbReference>
<dbReference type="InParanoid" id="P28862"/>
<dbReference type="OrthoDB" id="406838at2759"/>
<dbReference type="BRENDA" id="3.4.24.17">
    <property type="organism ID" value="3474"/>
</dbReference>
<dbReference type="Reactome" id="R-MMU-1442490">
    <property type="pathway name" value="Collagen degradation"/>
</dbReference>
<dbReference type="Reactome" id="R-MMU-1474228">
    <property type="pathway name" value="Degradation of the extracellular matrix"/>
</dbReference>
<dbReference type="Reactome" id="R-MMU-1592389">
    <property type="pathway name" value="Activation of Matrix Metalloproteinases"/>
</dbReference>
<dbReference type="Reactome" id="R-MMU-2022090">
    <property type="pathway name" value="Assembly of collagen fibrils and other multimeric structures"/>
</dbReference>
<dbReference type="Reactome" id="R-MMU-2179392">
    <property type="pathway name" value="EGFR Transactivation by Gastrin"/>
</dbReference>
<dbReference type="Reactome" id="R-MMU-9009391">
    <property type="pathway name" value="Extra-nuclear estrogen signaling"/>
</dbReference>
<dbReference type="BioGRID-ORCS" id="17392">
    <property type="hits" value="2 hits in 79 CRISPR screens"/>
</dbReference>
<dbReference type="ChiTaRS" id="Mmp3">
    <property type="organism name" value="mouse"/>
</dbReference>
<dbReference type="PRO" id="PR:P28862"/>
<dbReference type="Proteomes" id="UP000000589">
    <property type="component" value="Chromosome 9"/>
</dbReference>
<dbReference type="RNAct" id="P28862">
    <property type="molecule type" value="protein"/>
</dbReference>
<dbReference type="GO" id="GO:0005829">
    <property type="term" value="C:cytosol"/>
    <property type="evidence" value="ECO:0000314"/>
    <property type="project" value="ParkinsonsUK-UCL"/>
</dbReference>
<dbReference type="GO" id="GO:0031012">
    <property type="term" value="C:extracellular matrix"/>
    <property type="evidence" value="ECO:0007669"/>
    <property type="project" value="InterPro"/>
</dbReference>
<dbReference type="GO" id="GO:0005576">
    <property type="term" value="C:extracellular region"/>
    <property type="evidence" value="ECO:0000304"/>
    <property type="project" value="Reactome"/>
</dbReference>
<dbReference type="GO" id="GO:0005615">
    <property type="term" value="C:extracellular space"/>
    <property type="evidence" value="ECO:0007005"/>
    <property type="project" value="BHF-UCL"/>
</dbReference>
<dbReference type="GO" id="GO:0005739">
    <property type="term" value="C:mitochondrion"/>
    <property type="evidence" value="ECO:0000314"/>
    <property type="project" value="ParkinsonsUK-UCL"/>
</dbReference>
<dbReference type="GO" id="GO:0004222">
    <property type="term" value="F:metalloendopeptidase activity"/>
    <property type="evidence" value="ECO:0000304"/>
    <property type="project" value="Reactome"/>
</dbReference>
<dbReference type="GO" id="GO:0008233">
    <property type="term" value="F:peptidase activity"/>
    <property type="evidence" value="ECO:0000250"/>
    <property type="project" value="UniProtKB"/>
</dbReference>
<dbReference type="GO" id="GO:0008270">
    <property type="term" value="F:zinc ion binding"/>
    <property type="evidence" value="ECO:0007669"/>
    <property type="project" value="InterPro"/>
</dbReference>
<dbReference type="GO" id="GO:0071230">
    <property type="term" value="P:cellular response to amino acid stimulus"/>
    <property type="evidence" value="ECO:0000314"/>
    <property type="project" value="MGI"/>
</dbReference>
<dbReference type="GO" id="GO:0034614">
    <property type="term" value="P:cellular response to reactive oxygen species"/>
    <property type="evidence" value="ECO:0000315"/>
    <property type="project" value="ParkinsonsUK-UCL"/>
</dbReference>
<dbReference type="GO" id="GO:0071492">
    <property type="term" value="P:cellular response to UV-A"/>
    <property type="evidence" value="ECO:0000250"/>
    <property type="project" value="UniProtKB"/>
</dbReference>
<dbReference type="GO" id="GO:0030574">
    <property type="term" value="P:collagen catabolic process"/>
    <property type="evidence" value="ECO:0007669"/>
    <property type="project" value="UniProtKB-KW"/>
</dbReference>
<dbReference type="GO" id="GO:0045087">
    <property type="term" value="P:innate immune response"/>
    <property type="evidence" value="ECO:0007669"/>
    <property type="project" value="UniProtKB-KW"/>
</dbReference>
<dbReference type="GO" id="GO:0051898">
    <property type="term" value="P:negative regulation of phosphatidylinositol 3-kinase/protein kinase B signal transduction"/>
    <property type="evidence" value="ECO:0000315"/>
    <property type="project" value="ParkinsonsUK-UCL"/>
</dbReference>
<dbReference type="GO" id="GO:2000378">
    <property type="term" value="P:negative regulation of reactive oxygen species metabolic process"/>
    <property type="evidence" value="ECO:0007669"/>
    <property type="project" value="Ensembl"/>
</dbReference>
<dbReference type="GO" id="GO:0031334">
    <property type="term" value="P:positive regulation of protein-containing complex assembly"/>
    <property type="evidence" value="ECO:0007669"/>
    <property type="project" value="Ensembl"/>
</dbReference>
<dbReference type="GO" id="GO:0030163">
    <property type="term" value="P:protein catabolic process"/>
    <property type="evidence" value="ECO:0000315"/>
    <property type="project" value="ParkinsonsUK-UCL"/>
</dbReference>
<dbReference type="GO" id="GO:0006508">
    <property type="term" value="P:proteolysis"/>
    <property type="evidence" value="ECO:0000315"/>
    <property type="project" value="ParkinsonsUK-UCL"/>
</dbReference>
<dbReference type="GO" id="GO:0030334">
    <property type="term" value="P:regulation of cell migration"/>
    <property type="evidence" value="ECO:0000315"/>
    <property type="project" value="MGI"/>
</dbReference>
<dbReference type="CDD" id="cd00094">
    <property type="entry name" value="HX"/>
    <property type="match status" value="1"/>
</dbReference>
<dbReference type="CDD" id="cd04278">
    <property type="entry name" value="ZnMc_MMP"/>
    <property type="match status" value="1"/>
</dbReference>
<dbReference type="FunFam" id="3.40.390.10:FF:000007">
    <property type="entry name" value="Collagenase 3"/>
    <property type="match status" value="1"/>
</dbReference>
<dbReference type="FunFam" id="2.110.10.10:FF:000002">
    <property type="entry name" value="Matrix metallopeptidase 3"/>
    <property type="match status" value="1"/>
</dbReference>
<dbReference type="Gene3D" id="3.40.390.10">
    <property type="entry name" value="Collagenase (Catalytic Domain)"/>
    <property type="match status" value="1"/>
</dbReference>
<dbReference type="Gene3D" id="2.110.10.10">
    <property type="entry name" value="Hemopexin-like domain"/>
    <property type="match status" value="1"/>
</dbReference>
<dbReference type="InterPro" id="IPR000585">
    <property type="entry name" value="Hemopexin-like_dom"/>
</dbReference>
<dbReference type="InterPro" id="IPR036375">
    <property type="entry name" value="Hemopexin-like_dom_sf"/>
</dbReference>
<dbReference type="InterPro" id="IPR018487">
    <property type="entry name" value="Hemopexin-like_repeat"/>
</dbReference>
<dbReference type="InterPro" id="IPR018486">
    <property type="entry name" value="Hemopexin_CS"/>
</dbReference>
<dbReference type="InterPro" id="IPR033739">
    <property type="entry name" value="M10A_MMP"/>
</dbReference>
<dbReference type="InterPro" id="IPR024079">
    <property type="entry name" value="MetalloPept_cat_dom_sf"/>
</dbReference>
<dbReference type="InterPro" id="IPR001818">
    <property type="entry name" value="Pept_M10_metallopeptidase"/>
</dbReference>
<dbReference type="InterPro" id="IPR021190">
    <property type="entry name" value="Pept_M10A"/>
</dbReference>
<dbReference type="InterPro" id="IPR021158">
    <property type="entry name" value="Pept_M10A_Zn_BS"/>
</dbReference>
<dbReference type="InterPro" id="IPR006026">
    <property type="entry name" value="Peptidase_Metallo"/>
</dbReference>
<dbReference type="InterPro" id="IPR002477">
    <property type="entry name" value="Peptidoglycan-bd-like"/>
</dbReference>
<dbReference type="InterPro" id="IPR036365">
    <property type="entry name" value="PGBD-like_sf"/>
</dbReference>
<dbReference type="PANTHER" id="PTHR10201">
    <property type="entry name" value="MATRIX METALLOPROTEINASE"/>
    <property type="match status" value="1"/>
</dbReference>
<dbReference type="PANTHER" id="PTHR10201:SF215">
    <property type="entry name" value="STROMELYSIN-1"/>
    <property type="match status" value="1"/>
</dbReference>
<dbReference type="Pfam" id="PF00045">
    <property type="entry name" value="Hemopexin"/>
    <property type="match status" value="4"/>
</dbReference>
<dbReference type="Pfam" id="PF00413">
    <property type="entry name" value="Peptidase_M10"/>
    <property type="match status" value="1"/>
</dbReference>
<dbReference type="Pfam" id="PF01471">
    <property type="entry name" value="PG_binding_1"/>
    <property type="match status" value="1"/>
</dbReference>
<dbReference type="PIRSF" id="PIRSF001191">
    <property type="entry name" value="Peptidase_M10A_matrix"/>
    <property type="match status" value="1"/>
</dbReference>
<dbReference type="PRINTS" id="PR00138">
    <property type="entry name" value="MATRIXIN"/>
</dbReference>
<dbReference type="SMART" id="SM00120">
    <property type="entry name" value="HX"/>
    <property type="match status" value="4"/>
</dbReference>
<dbReference type="SMART" id="SM00235">
    <property type="entry name" value="ZnMc"/>
    <property type="match status" value="1"/>
</dbReference>
<dbReference type="SUPFAM" id="SSF50923">
    <property type="entry name" value="Hemopexin-like domain"/>
    <property type="match status" value="1"/>
</dbReference>
<dbReference type="SUPFAM" id="SSF55486">
    <property type="entry name" value="Metalloproteases ('zincins'), catalytic domain"/>
    <property type="match status" value="1"/>
</dbReference>
<dbReference type="SUPFAM" id="SSF47090">
    <property type="entry name" value="PGBD-like"/>
    <property type="match status" value="1"/>
</dbReference>
<dbReference type="PROSITE" id="PS00546">
    <property type="entry name" value="CYSTEINE_SWITCH"/>
    <property type="match status" value="1"/>
</dbReference>
<dbReference type="PROSITE" id="PS00024">
    <property type="entry name" value="HEMOPEXIN"/>
    <property type="match status" value="1"/>
</dbReference>
<dbReference type="PROSITE" id="PS51642">
    <property type="entry name" value="HEMOPEXIN_2"/>
    <property type="match status" value="4"/>
</dbReference>
<dbReference type="PROSITE" id="PS00142">
    <property type="entry name" value="ZINC_PROTEASE"/>
    <property type="match status" value="1"/>
</dbReference>
<protein>
    <recommendedName>
        <fullName>Stromelysin-1</fullName>
        <shortName>SL-1</shortName>
        <ecNumber>3.4.24.17</ecNumber>
    </recommendedName>
    <alternativeName>
        <fullName>EMS-2</fullName>
    </alternativeName>
    <alternativeName>
        <fullName>Matrix metalloproteinase-3</fullName>
        <shortName>MMP-3</shortName>
    </alternativeName>
    <alternativeName>
        <fullName>Transin-1</fullName>
    </alternativeName>
</protein>
<sequence>MKGLPVLLWLCVVVCSSYPLHDSARDDDAGMELLQKYLENYYGLAKDVKQFIKKKDSSLIVKKIQEMQKFLGLEMTGKLDSNTMELMHKPRCGVPDVGGFSTFPGSPKWRKSHITYRIVNYTPDLPRQSVDSAIEKALKVWEEVTPLTFSRISEGEADIMISFAVGEHGDFVPFDGPGTVLAHAYAPGPGINGDAHFDDDERWTEDVTGTNLFLVAAHELGHSLGLYHSAKAEALMYPVYKSSTDLSRFHLSQDDVDGIQSLYGTPTASPDVLVVPTKSNSLEPETSPMCSSTLFFDAVSTLRGEVLFFKDRHFWRKSLRTPEPEFYLISSFWPSLPSNMDAAYEVTNRDTVFIFKGNQFWAIRGHEELAGYPKSIHTLGLPATVKKIDAAISNKEKRKTYFFVEDKYWRFDEKKQSMEPGFPRKIAEDFPGVDSRVDAVFEAFGFLYFFSGSSQLEFDPNAKKVTHILKSNSWFNC</sequence>